<sequence length="665" mass="74238">METPSQRRATRSGAQASSTPLSPTRITRLQEKEDLQELNDRLAVYIDRVRSLETENAGLRLRITESEEVVSREVSGIKAAYEAELGDARKTLDSVAKERARLQLELSKVREEFKELKARNTKKEGDLLAAQARLKDLEALLNSKEAALSTALSEKRTLEGELHDLRGQVAKLEAALGEAKKQLQDEMLRRVDAENRLQTLKEELDFQKNIYSEELRETKRRHETRLVEIDNGKQREFESRLADALQELRAQHEDQVEQYKKELEKTYSAKLDNARQSAERNSNLVGAAHEELQQSRIRIDSLSAQLSQLQKQLAAKEAKLRDLEDSLARERDTSRRLLAEKEREMAEMRARMQQQLDEYQELLDIKLALDMEIHAYRKLLEGEEERLRLSPSPTSQRSRGRASSHSSQSQGGGSVTKKRKLESSESRSSFSQHARTSGRVAVEEVDEEGKFVRLRNKSNEDQSMGNWQIRRQNGDDPLMTYRFPPKFTLKAGQVVTIWASGAGATHSPPTDLVWKAQNTWGCGSSLRTALINSTGEEVAMRKLVRSLTMVEDNEDDDEDGEELLHHHRGSHCSGSGDPAEYNLRSRTVLCGTCGQPADKAAGGAGAQVGGSISSGSSASSVTVTRSFRSVGGSGGGSFGDNLVTRSYLLGNSSPRSQSSQNCSIM</sequence>
<accession>P48678</accession>
<accession>B3RH23</accession>
<accession>B3RH24</accession>
<accession>P11516</accession>
<accession>P97859</accession>
<accession>Q3TIH0</accession>
<accession>Q3TTS8</accession>
<accession>Q3U733</accession>
<accession>Q3U7I5</accession>
<accession>Q3UCA0</accession>
<accession>Q3UCJ8</accession>
<accession>Q3UCU3</accession>
<accession>Q91WF2</accession>
<accession>Q9DC21</accession>
<gene>
    <name type="primary">Lmna</name>
    <name type="synonym">Lmn1</name>
</gene>
<comment type="function">
    <molecule>Lamin-A/C</molecule>
    <text evidence="1 7 8 15 20 21 23 25 26 27">Lamins are intermediate filament proteins that assemble into a filamentous meshwork, and which constitute the major components of the nuclear lamina, a fibrous layer on the nucleoplasmic side of the inner nuclear membrane (PubMed:10579712, PubMed:28241138, PubMed:31576060). Lamins provide a framework for the nuclear envelope, bridging the nuclear envelope and chromatin, thereby playing an important role in nuclear assembly, chromatin organization, nuclear membrane and telomere dynamics (PubMed:10579712, PubMed:28241138). Lamin A and C also regulate matrix stiffness by conferring nuclear mechanical properties (By similarity). The structural integrity of the lamina is strictly controlled by the cell cycle, as seen by the disintegration and formation of the nuclear envelope in prophase and telophase, respectively (PubMed:10579712, PubMed:28241138). Lamin A and C are present in equal amounts in the lamina of mammals (By similarity). Also invoved in DNA repair: recruited by DNA repair proteins XRCC4 and IFFO1 to the DNA double-strand breaks (DSBs) to prevent chromosome translocation by immobilizing broken DNA ends (By similarity). Required for normal development of peripheral nervous system and skeletal muscle and for muscle satellite cell proliferation (PubMed:11799477, PubMed:19124654, PubMed:23535822). Required for osteoblastogenesis and bone formation (By similarity). Also prevents fat infiltration of muscle and bone marrow, helping to maintain the volume and strength of skeletal muscle and bone (PubMed:21547077, PubMed:21982926). Required for cardiac homeostasis (PubMed:26436652).</text>
</comment>
<comment type="function">
    <molecule>Prelamin-A/C</molecule>
    <text evidence="1">Prelamin-A/C can accelerate smooth muscle cell senescence. It acts to disrupt mitosis and induce DNA damage in vascular smooth muscle cells (VSMCs), leading to mitotic failure, genomic instability, and premature senescence.</text>
</comment>
<comment type="function">
    <molecule>Isoform C2</molecule>
    <text evidence="28">Isoform C2 may have a role in determining the organization of nuclear and chromosomal structures during spermatogenesis.</text>
</comment>
<comment type="subunit">
    <text evidence="1 9 10 11 13 17 18 19 22 24 25 26">Homodimer of lamin A and lamin C (PubMed:28241138). Lamin dimers then assemble into dimeric head-to-tail polymers (PubMed:28241138). Ultimately, two head-to-tail polymers assemble laterally into a protofilament with a uniformly shaped rod of 3.5 nm in diameter (PubMed:28241138). Interacts with lamin-associated polypeptides IA, IB and TMPO-alpha, RB1 and with emerin (By similarity). Proteolytically processed isoform A interacts with NARF (By similarity). Interacts with SREBF1, SREBF2, SUN1, SUN2 and TMEM43 (PubMed:11929849, PubMed:16380439, PubMed:16648470, PubMed:18230648, PubMed:19843581, PubMed:19933576). Interacts with TMEM201 (PubMed:22349700). Prelamin-A/C interacts with EMD. Interacts with DMPK; may regulate nuclear envelope stability (By similarity). Interacts with MLIP (PubMed:21498514, PubMed:26436652). Interacts with SUV39H1; the interaction increases stability of SUV39H1 (PubMed:23695662). Interacts with ITSN1 isoform 2 (By similarity). Interacts with IFFO1; the interaction forms an interior nucleoskeleton and the recruitment to DNA double-strand breaks (By similarity).</text>
</comment>
<comment type="subunit">
    <molecule>Prelamin-A/C</molecule>
    <text evidence="1">Interacts with EMD.</text>
</comment>
<comment type="subunit">
    <molecule>Isoform C</molecule>
    <text evidence="1">Interacts (via C-terminus) with LEMD2 (via N-terminus) (in vitro).</text>
</comment>
<comment type="subcellular location">
    <subcellularLocation>
        <location evidence="26">Nucleus lamina</location>
    </subcellularLocation>
    <subcellularLocation>
        <location evidence="1">Nucleus envelope</location>
    </subcellularLocation>
    <subcellularLocation>
        <location evidence="25">Nucleus</location>
        <location evidence="25">Nucleoplasm</location>
    </subcellularLocation>
    <subcellularLocation>
        <location evidence="1">Nucleus matrix</location>
    </subcellularLocation>
    <text evidence="1">Farnesylation of prelamin-A/C facilitates nuclear envelope targeting and subsequent cleavage by ZMPSTE24/FACE1 to remove the farnesyl group produces mature lamin-A/C, which can then be inserted into the nuclear lamina. EMD is required for proper localization of non-farnesylated prelamin-A/C. Also localizes to the micronuclear envelope in response to response to genome instability.</text>
</comment>
<comment type="alternative products">
    <event type="alternative splicing"/>
    <isoform>
        <id>P48678-1</id>
        <name>A</name>
        <sequence type="displayed"/>
    </isoform>
    <isoform>
        <id>P48678-2</id>
        <id>P11516-1</id>
        <name>C</name>
        <sequence type="described" ref="VSP_017064 VSP_017065"/>
    </isoform>
    <isoform>
        <id>P48678-3</id>
        <id>P11516-2</id>
        <name>C2</name>
        <sequence type="described" ref="VSP_002471 VSP_002472 VSP_017064 VSP_017065"/>
    </isoform>
    <text>Isoform A and isoform C are present in equal amounts in the lamina of mammals.</text>
</comment>
<comment type="tissue specificity">
    <text evidence="7 20 25">Expressed in liver and in bone marrow (at protein level) (PubMed:10579712, PubMed:21547077). Expressed in cardiomyocytes (PubMed:26436652).</text>
</comment>
<comment type="tissue specificity">
    <molecule>Isoform C2</molecule>
    <text evidence="28">Specifically expressed in germ cells.</text>
</comment>
<comment type="PTM">
    <text evidence="12">Proteolytic cleavage of the C-terminal of 18 residues of prelamin-A/C results in the production of lamin-A/C (PubMed:17652517). The prelamin-A/C maturation pathway includes farnesylation of CAAX motif by protein farnesyltransferase (FNTA and FNTB), removal of the last three amino acids (-AAX) by RCE1/FACE2 and/or ZMPSTE24, methylation of the C-terminal cysteine by ICMT and endoproteolytic removal of the last 15 C-terminal amino acids by ZMPSTE24 (PubMed:17652517). Proteolytic cleavage requires prior farnesylation and methylation, and absence of these blocks cleavage (PubMed:17652517).</text>
</comment>
<comment type="PTM">
    <text evidence="1">Farnesylation of prelamin-A/C facilitates nuclear envelope targeting.</text>
</comment>
<comment type="PTM">
    <text evidence="1">Phosphorylation plays a key role in lamin organization, subcellular localization and nuclear envelope disintegration. Phosphorylation by CDK1 at Ser-22 and Ser-392 at the onset of mitosis drives lamin disassembly and nuclear envelope breakdown. Phosphorylation at Ser-22 and Ser-392 during interphase promotes localization to the nucleoplasm and regulates lamina assembly. Phosphorylation at Ser-22, Ser-392 and Ser-629 during interphase causes redistribution between the nucleus and the cytoplasm. Phosphorylation at Ser-22 by CDK1 regulates matrix stiffness. Phosphorylation status of Ser-22 determines its localization between double-strand break (DSB) sites and the nuclear matrix. Phosphorylated by ATR at Ser-282 in response to DNA damage, leading to lamin disassembly and nuclear envelope rupture. Phosphorylation also regulates stability in micronuclei arising from genome instability: phosphorylation at Ser-395 by ATR in response to genome instability and double-stranded DNA breaks primes LMNA for subsequent phosphorylation at Ser-392 by CDK1 and micronuclei envelope rupture. The rupture of micronuclear envelope triggers the cGAS-STING pathway thereby activating the type I interferon response and innate immunity.</text>
</comment>
<comment type="PTM">
    <molecule>Isoform C</molecule>
    <text evidence="16">Isoform C is phosphorylated on Ser-392, Ser-407 and Ser-409 at interphase.</text>
</comment>
<comment type="PTM">
    <text evidence="27">Acetylation by KAT8 is required for nuclear architecture.</text>
</comment>
<comment type="PTM">
    <text evidence="1">Sumoylation is necessary for the localization to the nuclear envelope.</text>
</comment>
<comment type="PTM">
    <text>The N-terminus is blocked.</text>
</comment>
<comment type="disruption phenotype">
    <text evidence="7 8 15 20 21 23 25">Mutant mice survive postnatally for 6-8 weeks and show skeletal and cardiac myopathy, sarcopenia, osteopenia, decreased bone formation, neuropathy, abnormal neuromuscular junctions, decreased skeletal muscle growth and decreased muscle satellite cell proliferation. They develop ventricular dilation and cardiac dysfunction. Within 2-3 weeks they show a reduction in their growth rate and by week 4 their growth ceases with their mean body weight being half of that of the wild-type or the heterozygous littermates. Simultaneous knockout of LMNA and LAP2 results in partial rescue of the phenotype, with a 30% increase in survival rate and a 25-50% increase in body weight. Double knockouts for MLIP and LMNA die sooner than single LMNA knockout. They develop much more severe ventricular dilation and cardiac dysfunction (PubMed:26436652).</text>
</comment>
<comment type="similarity">
    <text evidence="5">Belongs to the intermediate filament family.</text>
</comment>
<comment type="sequence caution" evidence="33">
    <conflict type="erroneous initiation">
        <sequence resource="EMBL-CDS" id="BAE31539"/>
    </conflict>
    <text>Extended N-terminus.</text>
</comment>
<evidence type="ECO:0000250" key="1">
    <source>
        <dbReference type="UniProtKB" id="P02545"/>
    </source>
</evidence>
<evidence type="ECO:0000250" key="2">
    <source>
        <dbReference type="UniProtKB" id="P48679"/>
    </source>
</evidence>
<evidence type="ECO:0000255" key="3"/>
<evidence type="ECO:0000255" key="4">
    <source>
        <dbReference type="PROSITE-ProRule" id="PRU01187"/>
    </source>
</evidence>
<evidence type="ECO:0000255" key="5">
    <source>
        <dbReference type="PROSITE-ProRule" id="PRU01188"/>
    </source>
</evidence>
<evidence type="ECO:0000256" key="6">
    <source>
        <dbReference type="SAM" id="MobiDB-lite"/>
    </source>
</evidence>
<evidence type="ECO:0000269" key="7">
    <source>
    </source>
</evidence>
<evidence type="ECO:0000269" key="8">
    <source>
    </source>
</evidence>
<evidence type="ECO:0000269" key="9">
    <source>
    </source>
</evidence>
<evidence type="ECO:0000269" key="10">
    <source>
    </source>
</evidence>
<evidence type="ECO:0000269" key="11">
    <source>
    </source>
</evidence>
<evidence type="ECO:0000269" key="12">
    <source>
    </source>
</evidence>
<evidence type="ECO:0000269" key="13">
    <source>
    </source>
</evidence>
<evidence type="ECO:0000269" key="14">
    <source>
    </source>
</evidence>
<evidence type="ECO:0000269" key="15">
    <source>
    </source>
</evidence>
<evidence type="ECO:0000269" key="16">
    <source>
    </source>
</evidence>
<evidence type="ECO:0000269" key="17">
    <source>
    </source>
</evidence>
<evidence type="ECO:0000269" key="18">
    <source>
    </source>
</evidence>
<evidence type="ECO:0000269" key="19">
    <source>
    </source>
</evidence>
<evidence type="ECO:0000269" key="20">
    <source>
    </source>
</evidence>
<evidence type="ECO:0000269" key="21">
    <source>
    </source>
</evidence>
<evidence type="ECO:0000269" key="22">
    <source>
    </source>
</evidence>
<evidence type="ECO:0000269" key="23">
    <source>
    </source>
</evidence>
<evidence type="ECO:0000269" key="24">
    <source>
    </source>
</evidence>
<evidence type="ECO:0000269" key="25">
    <source>
    </source>
</evidence>
<evidence type="ECO:0000269" key="26">
    <source>
    </source>
</evidence>
<evidence type="ECO:0000269" key="27">
    <source>
    </source>
</evidence>
<evidence type="ECO:0000269" key="28">
    <source>
    </source>
</evidence>
<evidence type="ECO:0000303" key="29">
    <source>
    </source>
</evidence>
<evidence type="ECO:0000303" key="30">
    <source>
    </source>
</evidence>
<evidence type="ECO:0000303" key="31">
    <source>
    </source>
</evidence>
<evidence type="ECO:0000303" key="32">
    <source ref="4"/>
</evidence>
<evidence type="ECO:0000305" key="33"/>
<evidence type="ECO:0007744" key="34">
    <source>
    </source>
</evidence>
<evidence type="ECO:0007744" key="35">
    <source>
    </source>
</evidence>
<evidence type="ECO:0007744" key="36">
    <source>
    </source>
</evidence>
<evidence type="ECO:0007744" key="37">
    <source>
    </source>
</evidence>
<evidence type="ECO:0007744" key="38">
    <source>
    </source>
</evidence>
<evidence type="ECO:0007829" key="39">
    <source>
        <dbReference type="PDB" id="1UFG"/>
    </source>
</evidence>
<feature type="chain" id="PRO_0000398837" description="Prelamin-A/C">
    <location>
        <begin position="1"/>
        <end position="662"/>
    </location>
</feature>
<feature type="chain" id="PRO_0000063811" description="Lamin-A/C">
    <location>
        <begin position="1"/>
        <end position="647"/>
    </location>
</feature>
<feature type="propeptide" id="PRO_0000398838" description="Removed in Lamin-A/C form">
    <location>
        <begin position="648"/>
        <end position="662"/>
    </location>
</feature>
<feature type="propeptide" id="PRO_0000403443" description="Removed in Prelamin-A/C form and in Lamin-A/C form">
    <location>
        <begin position="663"/>
        <end position="665"/>
    </location>
</feature>
<feature type="domain" description="IF rod" evidence="5">
    <location>
        <begin position="31"/>
        <end position="387"/>
    </location>
</feature>
<feature type="domain" description="LTD" evidence="4">
    <location>
        <begin position="428"/>
        <end position="545"/>
    </location>
</feature>
<feature type="region of interest" description="Interaction with MLIP" evidence="1">
    <location>
        <begin position="1"/>
        <end position="130"/>
    </location>
</feature>
<feature type="region of interest" description="Head">
    <location>
        <begin position="1"/>
        <end position="33"/>
    </location>
</feature>
<feature type="region of interest" description="Disordered" evidence="6">
    <location>
        <begin position="1"/>
        <end position="25"/>
    </location>
</feature>
<feature type="region of interest" description="Coil 1A">
    <location>
        <begin position="34"/>
        <end position="70"/>
    </location>
</feature>
<feature type="region of interest" description="Linker 1">
    <location>
        <begin position="71"/>
        <end position="80"/>
    </location>
</feature>
<feature type="region of interest" description="Coil 1B">
    <location>
        <begin position="81"/>
        <end position="218"/>
    </location>
</feature>
<feature type="region of interest" description="Linker 2">
    <location>
        <begin position="219"/>
        <end position="242"/>
    </location>
</feature>
<feature type="region of interest" description="Coil 2">
    <location>
        <begin position="243"/>
        <end position="383"/>
    </location>
</feature>
<feature type="region of interest" description="Tail">
    <location>
        <begin position="384"/>
        <end position="665"/>
    </location>
</feature>
<feature type="region of interest" description="Disordered" evidence="6">
    <location>
        <begin position="384"/>
        <end position="442"/>
    </location>
</feature>
<feature type="region of interest" description="Disordered" evidence="6">
    <location>
        <begin position="553"/>
        <end position="577"/>
    </location>
</feature>
<feature type="short sequence motif" description="Nuclear localization signal" evidence="3">
    <location>
        <begin position="417"/>
        <end position="422"/>
    </location>
</feature>
<feature type="compositionally biased region" description="Low complexity" evidence="6">
    <location>
        <begin position="395"/>
        <end position="409"/>
    </location>
</feature>
<feature type="site" description="Heptad change of phase">
    <location>
        <position position="266"/>
    </location>
</feature>
<feature type="site" description="Stutter" evidence="33">
    <location>
        <position position="325"/>
    </location>
</feature>
<feature type="site" description="Heptad change of phase">
    <location>
        <position position="330"/>
    </location>
</feature>
<feature type="site" description="Cleavage; by endoprotease" evidence="1">
    <location>
        <begin position="647"/>
        <end position="648"/>
    </location>
</feature>
<feature type="modified residue" description="N-acetylmethionine" evidence="1">
    <location>
        <position position="1"/>
    </location>
</feature>
<feature type="modified residue" description="Phosphothreonine" evidence="1">
    <location>
        <position position="3"/>
    </location>
</feature>
<feature type="modified residue" description="Phosphoserine" evidence="1">
    <location>
        <position position="5"/>
    </location>
</feature>
<feature type="modified residue" description="Phosphothreonine" evidence="1">
    <location>
        <position position="10"/>
    </location>
</feature>
<feature type="modified residue" description="Phosphoserine" evidence="37">
    <location>
        <position position="12"/>
    </location>
</feature>
<feature type="modified residue" description="Phosphoserine" evidence="1">
    <location>
        <position position="18"/>
    </location>
</feature>
<feature type="modified residue" description="Phosphothreonine" evidence="34 37">
    <location>
        <position position="19"/>
    </location>
</feature>
<feature type="modified residue" description="Phosphoserine" evidence="34 36 37">
    <location>
        <position position="22"/>
    </location>
</feature>
<feature type="modified residue" description="N6-acetyllysine; alternate" evidence="27 38">
    <location>
        <position position="32"/>
    </location>
</feature>
<feature type="modified residue" description="N6-succinyllysine; alternate" evidence="38">
    <location>
        <position position="32"/>
    </location>
</feature>
<feature type="modified residue" description="Phosphoserine" evidence="1">
    <location>
        <position position="51"/>
    </location>
</feature>
<feature type="modified residue" description="Phosphoserine" evidence="1">
    <location>
        <position position="66"/>
    </location>
</feature>
<feature type="modified residue" description="Phosphoserine" evidence="1">
    <location>
        <position position="71"/>
    </location>
</feature>
<feature type="modified residue" description="N6-acetyllysine" evidence="27">
    <location>
        <position position="78"/>
    </location>
</feature>
<feature type="modified residue" description="N6-acetyllysine" evidence="27">
    <location>
        <position position="97"/>
    </location>
</feature>
<feature type="modified residue" description="Phosphoserine" evidence="1">
    <location>
        <position position="107"/>
    </location>
</feature>
<feature type="modified residue" description="N6-acetyllysine" evidence="27">
    <location>
        <position position="108"/>
    </location>
</feature>
<feature type="modified residue" description="N6-acetyllysine" evidence="27">
    <location>
        <position position="114"/>
    </location>
</feature>
<feature type="modified residue" description="N6-acetyllysine" evidence="38">
    <location>
        <position position="123"/>
    </location>
</feature>
<feature type="modified residue" description="N6-acetyllysine" evidence="27 38">
    <location>
        <position position="135"/>
    </location>
</feature>
<feature type="modified residue" description="N6-acetyllysine" evidence="27">
    <location>
        <position position="144"/>
    </location>
</feature>
<feature type="modified residue" description="N6-acetyllysine" evidence="27 38">
    <location>
        <position position="155"/>
    </location>
</feature>
<feature type="modified residue" description="N6-acetyllysine; alternate" evidence="27 38">
    <location>
        <position position="171"/>
    </location>
</feature>
<feature type="modified residue" description="N6-succinyllysine; alternate" evidence="38">
    <location>
        <position position="171"/>
    </location>
</feature>
<feature type="modified residue" description="N6-acetyllysine" evidence="27">
    <location>
        <position position="180"/>
    </location>
</feature>
<feature type="modified residue" description="N6-acetyllysine" evidence="27 38">
    <location>
        <position position="201"/>
    </location>
</feature>
<feature type="modified residue" description="N6-acetyllysine" evidence="27">
    <location>
        <position position="208"/>
    </location>
</feature>
<feature type="modified residue" description="Phosphoserine" evidence="1">
    <location>
        <position position="212"/>
    </location>
</feature>
<feature type="modified residue" description="N6-acetyllysine" evidence="27">
    <location>
        <position position="233"/>
    </location>
</feature>
<feature type="modified residue" description="N6-acetyllysine" evidence="27 38">
    <location>
        <position position="260"/>
    </location>
</feature>
<feature type="modified residue" description="N6-acetyllysine" evidence="27">
    <location>
        <position position="265"/>
    </location>
</feature>
<feature type="modified residue" description="N6-acetyllysine" evidence="27 38">
    <location>
        <position position="270"/>
    </location>
</feature>
<feature type="modified residue" description="Phosphoserine" evidence="1">
    <location>
        <position position="277"/>
    </location>
</feature>
<feature type="modified residue" description="Phosphoserine" evidence="1">
    <location>
        <position position="282"/>
    </location>
</feature>
<feature type="modified residue" description="Phosphoserine" evidence="37">
    <location>
        <position position="301"/>
    </location>
</feature>
<feature type="modified residue" description="Phosphoserine" evidence="1">
    <location>
        <position position="307"/>
    </location>
</feature>
<feature type="modified residue" description="N6-acetyllysine" evidence="27 38">
    <location>
        <position position="311"/>
    </location>
</feature>
<feature type="modified residue" description="N6-acetyllysine" evidence="27">
    <location>
        <position position="316"/>
    </location>
</feature>
<feature type="modified residue" description="N6-acetyllysine" evidence="27">
    <location>
        <position position="341"/>
    </location>
</feature>
<feature type="modified residue" description="Phosphoserine" evidence="35 37">
    <location>
        <position position="390"/>
    </location>
</feature>
<feature type="modified residue" description="Phosphoserine; by CDK1" evidence="16 35 37">
    <location>
        <position position="392"/>
    </location>
</feature>
<feature type="modified residue" description="Phosphoserine" evidence="1">
    <location>
        <position position="395"/>
    </location>
</feature>
<feature type="modified residue" description="Phosphoserine" evidence="1">
    <location>
        <position position="398"/>
    </location>
</feature>
<feature type="modified residue" description="Phosphoserine" evidence="1">
    <location>
        <position position="403"/>
    </location>
</feature>
<feature type="modified residue" description="Phosphoserine" evidence="1">
    <location>
        <position position="404"/>
    </location>
</feature>
<feature type="modified residue" description="Phosphoserine" evidence="1">
    <location>
        <position position="406"/>
    </location>
</feature>
<feature type="modified residue" description="Phosphoserine" evidence="16">
    <location>
        <position position="407"/>
    </location>
</feature>
<feature type="modified residue" description="Phosphoserine" evidence="16">
    <location>
        <position position="409"/>
    </location>
</feature>
<feature type="modified residue" description="Phosphoserine" evidence="1">
    <location>
        <position position="414"/>
    </location>
</feature>
<feature type="modified residue" description="Phosphothreonine" evidence="1">
    <location>
        <position position="416"/>
    </location>
</feature>
<feature type="modified residue" description="N6-acetyllysine" evidence="27">
    <location>
        <position position="417"/>
    </location>
</feature>
<feature type="modified residue" description="N6-acetyllysine" evidence="27">
    <location>
        <position position="420"/>
    </location>
</feature>
<feature type="modified residue" description="Phosphoserine" evidence="1">
    <location>
        <position position="423"/>
    </location>
</feature>
<feature type="modified residue" description="Phosphoserine" evidence="1">
    <location>
        <position position="426"/>
    </location>
</feature>
<feature type="modified residue" description="Phosphoserine" evidence="1">
    <location>
        <position position="429"/>
    </location>
</feature>
<feature type="modified residue" description="Phosphoserine" evidence="1">
    <location>
        <position position="431"/>
    </location>
</feature>
<feature type="modified residue" description="N6-acetyllysine" evidence="27 38">
    <location>
        <position position="450"/>
    </location>
</feature>
<feature type="modified residue" description="N6-acetyllysine" evidence="38">
    <location>
        <position position="457"/>
    </location>
</feature>
<feature type="modified residue" description="Phosphoserine" evidence="37">
    <location>
        <position position="458"/>
    </location>
</feature>
<feature type="modified residue" description="Phosphoserine" evidence="1">
    <location>
        <position position="463"/>
    </location>
</feature>
<feature type="modified residue" description="N6-acetyllysine" evidence="27">
    <location>
        <position position="486"/>
    </location>
</feature>
<feature type="modified residue" description="Phosphothreonine" evidence="2">
    <location>
        <position position="496"/>
    </location>
</feature>
<feature type="modified residue" description="Phosphoserine" evidence="2">
    <location>
        <position position="500"/>
    </location>
</feature>
<feature type="modified residue" description="Phosphothreonine" evidence="1">
    <location>
        <position position="505"/>
    </location>
</feature>
<feature type="modified residue" description="Phosphothreonine" evidence="2">
    <location>
        <position position="510"/>
    </location>
</feature>
<feature type="modified residue" description="Phosphoserine" evidence="1">
    <location>
        <position position="533"/>
    </location>
</feature>
<feature type="modified residue" description="Phosphoserine" evidence="36">
    <location>
        <position position="546"/>
    </location>
</feature>
<feature type="modified residue" description="Phosphothreonine" evidence="37">
    <location>
        <position position="548"/>
    </location>
</feature>
<feature type="modified residue" description="Phosphoserine" evidence="37">
    <location>
        <position position="570"/>
    </location>
</feature>
<feature type="modified residue" description="Phosphoserine" evidence="37">
    <location>
        <position position="573"/>
    </location>
</feature>
<feature type="modified residue" description="Phosphoserine" evidence="1">
    <location>
        <position position="613"/>
    </location>
</feature>
<feature type="modified residue" description="Phosphoserine" evidence="1">
    <location>
        <position position="614"/>
    </location>
</feature>
<feature type="modified residue" description="Phosphoserine" evidence="37">
    <location>
        <position position="617"/>
    </location>
</feature>
<feature type="modified residue" description="Phosphoserine" evidence="37">
    <location>
        <position position="620"/>
    </location>
</feature>
<feature type="modified residue" description="Phosphoserine" evidence="37">
    <location>
        <position position="629"/>
    </location>
</feature>
<feature type="modified residue" description="Phosphoserine" evidence="37">
    <location>
        <position position="633"/>
    </location>
</feature>
<feature type="modified residue" description="Phosphoserine" evidence="37">
    <location>
        <position position="637"/>
    </location>
</feature>
<feature type="modified residue" description="Phosphoserine" evidence="34 37">
    <location>
        <position position="653"/>
    </location>
</feature>
<feature type="modified residue" description="Cysteine methyl ester" evidence="1">
    <location>
        <position position="662"/>
    </location>
</feature>
<feature type="lipid moiety-binding region" description="S-farnesyl cysteine" evidence="1">
    <location>
        <position position="662"/>
    </location>
</feature>
<feature type="glycosylation site" description="O-linked (GlcNAc) serine" evidence="1">
    <location>
        <position position="626"/>
    </location>
</feature>
<feature type="glycosylation site" description="O-linked (GlcNAc) serine" evidence="1">
    <location>
        <position position="629"/>
    </location>
</feature>
<feature type="cross-link" description="Glycyl lysine isopeptide (Lys-Gly) (interchain with G-Cter in SUMO2); alternate" evidence="1">
    <location>
        <position position="32"/>
    </location>
</feature>
<feature type="cross-link" description="Glycyl lysine isopeptide (Lys-Gly) (interchain with G-Cter in SUMO2)" evidence="1">
    <location>
        <position position="97"/>
    </location>
</feature>
<feature type="cross-link" description="Glycyl lysine isopeptide (Lys-Gly) (interchain with G-Cter in SUMO2); alternate" evidence="1">
    <location>
        <position position="171"/>
    </location>
</feature>
<feature type="cross-link" description="Glycyl lysine isopeptide (Lys-Gly) (interchain with G-Cter in SUMO); alternate" evidence="1">
    <location>
        <position position="201"/>
    </location>
</feature>
<feature type="cross-link" description="Glycyl lysine isopeptide (Lys-Gly) (interchain with G-Cter in SUMO2); alternate" evidence="1">
    <location>
        <position position="201"/>
    </location>
</feature>
<feature type="cross-link" description="Glycyl lysine isopeptide (Lys-Gly) (interchain with G-Cter in SUMO2)" evidence="1">
    <location>
        <position position="208"/>
    </location>
</feature>
<feature type="cross-link" description="Glycyl lysine isopeptide (Lys-Gly) (interchain with G-Cter in SUMO2)" evidence="1">
    <location>
        <position position="219"/>
    </location>
</feature>
<feature type="cross-link" description="Glycyl lysine isopeptide (Lys-Gly) (interchain with G-Cter in SUMO2)" evidence="1">
    <location>
        <position position="233"/>
    </location>
</feature>
<feature type="cross-link" description="Glycyl lysine isopeptide (Lys-Gly) (interchain with G-Cter in SUMO2); alternate" evidence="1">
    <location>
        <position position="260"/>
    </location>
</feature>
<feature type="cross-link" description="Glycyl lysine isopeptide (Lys-Gly) (interchain with G-Cter in SUMO2); alternate" evidence="1">
    <location>
        <position position="270"/>
    </location>
</feature>
<feature type="cross-link" description="Glycyl lysine isopeptide (Lys-Gly) (interchain with G-Cter in SUMO2); alternate" evidence="1">
    <location>
        <position position="311"/>
    </location>
</feature>
<feature type="cross-link" description="Glycyl lysine isopeptide (Lys-Gly) (interchain with G-Cter in SUMO2)" evidence="1">
    <location>
        <position position="366"/>
    </location>
</feature>
<feature type="cross-link" description="Glycyl lysine isopeptide (Lys-Gly) (interchain with G-Cter in SUMO2)" evidence="1">
    <location>
        <position position="378"/>
    </location>
</feature>
<feature type="cross-link" description="Glycyl lysine isopeptide (Lys-Gly) (interchain with G-Cter in SUMO2)" evidence="1">
    <location>
        <position position="417"/>
    </location>
</feature>
<feature type="cross-link" description="Glycyl lysine isopeptide (Lys-Gly) (interchain with G-Cter in SUMO2)" evidence="1">
    <location>
        <position position="420"/>
    </location>
</feature>
<feature type="cross-link" description="Glycyl lysine isopeptide (Lys-Gly) (interchain with G-Cter in SUMO2); alternate" evidence="1">
    <location>
        <position position="450"/>
    </location>
</feature>
<feature type="cross-link" description="Glycyl lysine isopeptide (Lys-Gly) (interchain with G-Cter in SUMO2)" evidence="1">
    <location>
        <position position="486"/>
    </location>
</feature>
<feature type="cross-link" description="Glycyl lysine isopeptide (Lys-Gly) (interchain with G-Cter in SUMO1); alternate" evidence="1">
    <location>
        <position position="599"/>
    </location>
</feature>
<feature type="cross-link" description="Glycyl lysine isopeptide (Lys-Gly) (interchain with G-Cter in SUMO2); alternate" evidence="1">
    <location>
        <position position="599"/>
    </location>
</feature>
<feature type="splice variant" id="VSP_002471" description="In isoform C2." evidence="31">
    <location>
        <begin position="1"/>
        <end position="112"/>
    </location>
</feature>
<feature type="splice variant" id="VSP_002472" description="In isoform C2." evidence="31">
    <original>FKELKA</original>
    <variation>MGNAEG</variation>
    <location>
        <begin position="113"/>
        <end position="118"/>
    </location>
</feature>
<feature type="splice variant" id="VSP_017064" description="In isoform C and isoform C2." evidence="29 30 31 32">
    <original>GSHCSG</original>
    <variation>VSGSRR</variation>
    <location>
        <begin position="569"/>
        <end position="574"/>
    </location>
</feature>
<feature type="splice variant" id="VSP_017065" description="In isoform C and isoform C2." evidence="29 30 31 32">
    <location>
        <begin position="575"/>
        <end position="665"/>
    </location>
</feature>
<feature type="mutagenesis site" description="Decreased acetylation by KAT8, leading to impaired nuclear architecture; when associated with R-108 and R-311." evidence="27">
    <original>K</original>
    <variation>R</variation>
    <location>
        <position position="97"/>
    </location>
</feature>
<feature type="mutagenesis site" description="Decreased acetylation by KAT8, leading to impaired nuclear architecture; when associated with R-97 and R-311." evidence="27">
    <original>K</original>
    <variation>R</variation>
    <location>
        <position position="108"/>
    </location>
</feature>
<feature type="mutagenesis site" description="Decreased sumoylation; aberrant localization with decreased nuclear rim staining and formation of intranuclear foci; associated with increased cell death." evidence="14">
    <original>K</original>
    <variation>L</variation>
    <location>
        <position position="201"/>
    </location>
</feature>
<feature type="mutagenesis site" description="Decreased sumoylation; aberrant localization with decreased nuclear rim staining and formation of intranuclear foci; associated with increased cell death." evidence="14">
    <original>E</original>
    <variation>G</variation>
    <variation>K</variation>
    <location>
        <position position="203"/>
    </location>
</feature>
<feature type="mutagenesis site" description="Mimics acetylation, promoting nuclear architecture." evidence="27">
    <original>KQLAAKEAK</original>
    <variation>QQLAAKEAQ</variation>
    <location>
        <begin position="311"/>
        <end position="319"/>
    </location>
</feature>
<feature type="mutagenesis site" description="Decreased acetylation by KAT8, leading to impaired nuclear architecture; when associated with R-97 and R-108." evidence="27">
    <original>K</original>
    <variation>R</variation>
    <location>
        <position position="311"/>
    </location>
</feature>
<feature type="sequence conflict" description="In Ref. 5; BAE31384/BAE29519." evidence="33" ref="5">
    <original>P</original>
    <variation>S</variation>
    <location>
        <position position="4"/>
    </location>
</feature>
<feature type="sequence conflict" description="In Ref. 2; CAA32372." evidence="33" ref="2">
    <original>AR</original>
    <variation>VC</variation>
    <location>
        <begin position="118"/>
        <end position="119"/>
    </location>
</feature>
<feature type="sequence conflict" description="In Ref. 5; BAE39876." evidence="33" ref="5">
    <original>A</original>
    <variation>D</variation>
    <location>
        <position position="118"/>
    </location>
</feature>
<feature type="sequence conflict" description="In Ref. 5; BAE29614." evidence="33" ref="5">
    <original>E</original>
    <variation>G</variation>
    <location>
        <position position="340"/>
    </location>
</feature>
<feature type="sequence conflict" description="In Ref. 2; CAA32372." evidence="33" ref="2">
    <original>R</original>
    <variation>P</variation>
    <location>
        <position position="401"/>
    </location>
</feature>
<feature type="sequence conflict" description="In Ref. 2; CAA32372." evidence="33" ref="2">
    <original>RV</original>
    <variation>WL</variation>
    <location>
        <begin position="439"/>
        <end position="440"/>
    </location>
</feature>
<feature type="sequence conflict" description="In Ref. 5; BAE31384." evidence="33" ref="5">
    <original>K</original>
    <variation>E</variation>
    <location>
        <position position="450"/>
    </location>
</feature>
<feature type="sequence conflict" description="In Ref. 5; BAE36246." evidence="33" ref="5">
    <original>R</original>
    <variation>L</variation>
    <location>
        <position position="453"/>
    </location>
</feature>
<feature type="sequence conflict" description="In Ref. 5; BAB23415." evidence="33" ref="5">
    <original>I</original>
    <variation>V</variation>
    <location>
        <position position="612"/>
    </location>
</feature>
<feature type="sequence conflict" description="In Ref. 5; BAB23415." evidence="33" ref="5">
    <original>S</original>
    <variation>Y</variation>
    <location>
        <position position="617"/>
    </location>
</feature>
<feature type="sequence conflict" description="In Ref. 8; BAA02476." evidence="33" ref="8">
    <original>V</original>
    <variation>A</variation>
    <location>
        <position position="623"/>
    </location>
</feature>
<feature type="strand" evidence="39">
    <location>
        <begin position="417"/>
        <end position="420"/>
    </location>
</feature>
<feature type="strand" evidence="39">
    <location>
        <begin position="433"/>
        <end position="436"/>
    </location>
</feature>
<feature type="strand" evidence="39">
    <location>
        <begin position="438"/>
        <end position="445"/>
    </location>
</feature>
<feature type="strand" evidence="39">
    <location>
        <begin position="449"/>
        <end position="456"/>
    </location>
</feature>
<feature type="strand" evidence="39">
    <location>
        <begin position="458"/>
        <end position="460"/>
    </location>
</feature>
<feature type="strand" evidence="39">
    <location>
        <begin position="468"/>
        <end position="473"/>
    </location>
</feature>
<feature type="strand" evidence="39">
    <location>
        <begin position="479"/>
        <end position="482"/>
    </location>
</feature>
<feature type="strand" evidence="39">
    <location>
        <begin position="494"/>
        <end position="503"/>
    </location>
</feature>
<feature type="turn" evidence="39">
    <location>
        <begin position="508"/>
        <end position="510"/>
    </location>
</feature>
<feature type="strand" evidence="39">
    <location>
        <begin position="511"/>
        <end position="514"/>
    </location>
</feature>
<feature type="strand" evidence="39">
    <location>
        <begin position="516"/>
        <end position="518"/>
    </location>
</feature>
<feature type="strand" evidence="39">
    <location>
        <begin position="523"/>
        <end position="531"/>
    </location>
</feature>
<feature type="strand" evidence="39">
    <location>
        <begin position="533"/>
        <end position="535"/>
    </location>
</feature>
<feature type="strand" evidence="39">
    <location>
        <begin position="537"/>
        <end position="544"/>
    </location>
</feature>
<feature type="modified residue" description="Phosphoserine" evidence="16">
    <location sequence="P48678-2">
        <position position="392"/>
    </location>
</feature>
<feature type="modified residue" description="Phosphoserine" evidence="16">
    <location sequence="P48678-2">
        <position position="407"/>
    </location>
</feature>
<feature type="modified residue" description="Phosphoserine" evidence="16">
    <location sequence="P48678-2">
        <position position="409"/>
    </location>
</feature>
<feature type="modified residue" description="Phosphoserine" evidence="37">
    <location sequence="P48678-2">
        <position position="572"/>
    </location>
</feature>
<feature type="modified residue" description="Phosphoserine" evidence="37">
    <location sequence="P48678-3">
        <position position="460"/>
    </location>
</feature>
<protein>
    <recommendedName>
        <fullName>Prelamin-A/C</fullName>
    </recommendedName>
    <component>
        <recommendedName>
            <fullName>Lamin-A/C</fullName>
        </recommendedName>
    </component>
</protein>
<keyword id="KW-0002">3D-structure</keyword>
<keyword id="KW-0007">Acetylation</keyword>
<keyword id="KW-0025">Alternative splicing</keyword>
<keyword id="KW-0175">Coiled coil</keyword>
<keyword id="KW-0903">Direct protein sequencing</keyword>
<keyword id="KW-0325">Glycoprotein</keyword>
<keyword id="KW-0403">Intermediate filament</keyword>
<keyword id="KW-1017">Isopeptide bond</keyword>
<keyword id="KW-0449">Lipoprotein</keyword>
<keyword id="KW-0488">Methylation</keyword>
<keyword id="KW-0539">Nucleus</keyword>
<keyword id="KW-0597">Phosphoprotein</keyword>
<keyword id="KW-0636">Prenylation</keyword>
<keyword id="KW-1185">Reference proteome</keyword>
<keyword id="KW-0832">Ubl conjugation</keyword>
<name>LMNA_MOUSE</name>
<proteinExistence type="evidence at protein level"/>
<dbReference type="EMBL" id="D49733">
    <property type="protein sequence ID" value="BAA08569.1"/>
    <property type="molecule type" value="Genomic_DNA"/>
</dbReference>
<dbReference type="EMBL" id="D49733">
    <property type="protein sequence ID" value="BAA08570.1"/>
    <property type="molecule type" value="Genomic_DNA"/>
</dbReference>
<dbReference type="EMBL" id="D49733">
    <property type="protein sequence ID" value="BAA08571.1"/>
    <property type="molecule type" value="Genomic_DNA"/>
</dbReference>
<dbReference type="EMBL" id="X14170">
    <property type="protein sequence ID" value="CAA32372.1"/>
    <property type="molecule type" value="mRNA"/>
</dbReference>
<dbReference type="EMBL" id="D14850">
    <property type="protein sequence ID" value="BAA03578.1"/>
    <property type="molecule type" value="mRNA"/>
</dbReference>
<dbReference type="EMBL" id="DQ832702">
    <property type="protein sequence ID" value="ABI16251.1"/>
    <property type="molecule type" value="mRNA"/>
</dbReference>
<dbReference type="EMBL" id="DQ832703">
    <property type="protein sequence ID" value="ABI16252.1"/>
    <property type="molecule type" value="mRNA"/>
</dbReference>
<dbReference type="EMBL" id="AK004619">
    <property type="protein sequence ID" value="BAB23415.1"/>
    <property type="molecule type" value="mRNA"/>
</dbReference>
<dbReference type="EMBL" id="AK147150">
    <property type="protein sequence ID" value="BAE27717.1"/>
    <property type="molecule type" value="mRNA"/>
</dbReference>
<dbReference type="EMBL" id="AK149998">
    <property type="protein sequence ID" value="BAE29226.1"/>
    <property type="molecule type" value="mRNA"/>
</dbReference>
<dbReference type="EMBL" id="AK150391">
    <property type="protein sequence ID" value="BAE29519.1"/>
    <property type="molecule type" value="mRNA"/>
</dbReference>
<dbReference type="EMBL" id="AK150501">
    <property type="protein sequence ID" value="BAE29614.1"/>
    <property type="molecule type" value="mRNA"/>
</dbReference>
<dbReference type="EMBL" id="AK150624">
    <property type="protein sequence ID" value="BAE29714.1"/>
    <property type="molecule type" value="mRNA"/>
</dbReference>
<dbReference type="EMBL" id="AK152539">
    <property type="protein sequence ID" value="BAE31294.1"/>
    <property type="molecule type" value="mRNA"/>
</dbReference>
<dbReference type="EMBL" id="AK152646">
    <property type="protein sequence ID" value="BAE31384.1"/>
    <property type="molecule type" value="mRNA"/>
</dbReference>
<dbReference type="EMBL" id="AK152846">
    <property type="protein sequence ID" value="BAE31539.1"/>
    <property type="status" value="ALT_INIT"/>
    <property type="molecule type" value="mRNA"/>
</dbReference>
<dbReference type="EMBL" id="AK161221">
    <property type="protein sequence ID" value="BAE36246.1"/>
    <property type="molecule type" value="mRNA"/>
</dbReference>
<dbReference type="EMBL" id="AK167858">
    <property type="protein sequence ID" value="BAE39876.1"/>
    <property type="molecule type" value="mRNA"/>
</dbReference>
<dbReference type="EMBL" id="CH466547">
    <property type="protein sequence ID" value="EDL15275.1"/>
    <property type="molecule type" value="Genomic_DNA"/>
</dbReference>
<dbReference type="EMBL" id="BC015302">
    <property type="protein sequence ID" value="AAH15302.1"/>
    <property type="molecule type" value="mRNA"/>
</dbReference>
<dbReference type="EMBL" id="BC094020">
    <property type="protein sequence ID" value="AAH94020.1"/>
    <property type="molecule type" value="mRNA"/>
</dbReference>
<dbReference type="EMBL" id="D13181">
    <property type="protein sequence ID" value="BAA02476.1"/>
    <property type="molecule type" value="mRNA"/>
</dbReference>
<dbReference type="CCDS" id="CCDS38482.1">
    <molecule id="P48678-1"/>
</dbReference>
<dbReference type="CCDS" id="CCDS38483.1">
    <molecule id="P48678-3"/>
</dbReference>
<dbReference type="CCDS" id="CCDS50951.1">
    <molecule id="P48678-2"/>
</dbReference>
<dbReference type="PIR" id="I53414">
    <property type="entry name" value="I53414"/>
</dbReference>
<dbReference type="PIR" id="S04333">
    <property type="entry name" value="S04333"/>
</dbReference>
<dbReference type="PIR" id="S18324">
    <property type="entry name" value="S18324"/>
</dbReference>
<dbReference type="PIR" id="S28182">
    <property type="entry name" value="S28182"/>
</dbReference>
<dbReference type="RefSeq" id="NP_001002011.2">
    <molecule id="P48678-1"/>
    <property type="nucleotide sequence ID" value="NM_001002011.3"/>
</dbReference>
<dbReference type="RefSeq" id="NP_001104572.1">
    <molecule id="P48678-2"/>
    <property type="nucleotide sequence ID" value="NM_001111102.2"/>
</dbReference>
<dbReference type="RefSeq" id="NP_062263.1">
    <molecule id="P48678-3"/>
    <property type="nucleotide sequence ID" value="NM_019390.3"/>
</dbReference>
<dbReference type="RefSeq" id="XP_006501136.1">
    <molecule id="P48678-1"/>
    <property type="nucleotide sequence ID" value="XM_006501073.2"/>
</dbReference>
<dbReference type="PDB" id="1UFG">
    <property type="method" value="NMR"/>
    <property type="chains" value="A=408-545"/>
</dbReference>
<dbReference type="PDBsum" id="1UFG"/>
<dbReference type="BMRB" id="P48678"/>
<dbReference type="SMR" id="P48678"/>
<dbReference type="BioGRID" id="201176">
    <property type="interactions" value="86"/>
</dbReference>
<dbReference type="CORUM" id="P48678"/>
<dbReference type="DIP" id="DIP-31384N"/>
<dbReference type="FunCoup" id="P48678">
    <property type="interactions" value="2392"/>
</dbReference>
<dbReference type="IntAct" id="P48678">
    <property type="interactions" value="25"/>
</dbReference>
<dbReference type="MINT" id="P48678"/>
<dbReference type="STRING" id="10090.ENSMUSP00000029699"/>
<dbReference type="GlyGen" id="P48678">
    <property type="glycosylation" value="7 sites, 1 N-linked glycan (1 site), 1 O-linked glycan (4 sites)"/>
</dbReference>
<dbReference type="iPTMnet" id="P48678"/>
<dbReference type="PhosphoSitePlus" id="P48678"/>
<dbReference type="SwissPalm" id="P48678"/>
<dbReference type="REPRODUCTION-2DPAGE" id="IPI00400300"/>
<dbReference type="REPRODUCTION-2DPAGE" id="IPI00620256"/>
<dbReference type="CPTAC" id="non-CPTAC-3719"/>
<dbReference type="CPTAC" id="non-CPTAC-3925"/>
<dbReference type="jPOST" id="P48678"/>
<dbReference type="PaxDb" id="10090-ENSMUSP00000029699"/>
<dbReference type="PeptideAtlas" id="P48678"/>
<dbReference type="ProteomicsDB" id="286217">
    <molecule id="P48678-1"/>
</dbReference>
<dbReference type="ProteomicsDB" id="286218">
    <molecule id="P48678-2"/>
</dbReference>
<dbReference type="ProteomicsDB" id="286219">
    <molecule id="P48678-3"/>
</dbReference>
<dbReference type="Pumba" id="P48678"/>
<dbReference type="TopDownProteomics" id="P48678-2">
    <molecule id="P48678-2"/>
</dbReference>
<dbReference type="Antibodypedia" id="1676">
    <property type="antibodies" value="1681 antibodies from 51 providers"/>
</dbReference>
<dbReference type="DNASU" id="16905"/>
<dbReference type="Ensembl" id="ENSMUST00000029699.13">
    <molecule id="P48678-1"/>
    <property type="protein sequence ID" value="ENSMUSP00000029699.7"/>
    <property type="gene ID" value="ENSMUSG00000028063.16"/>
</dbReference>
<dbReference type="Ensembl" id="ENSMUST00000036252.7">
    <molecule id="P48678-3"/>
    <property type="protein sequence ID" value="ENSMUSP00000040265.7"/>
    <property type="gene ID" value="ENSMUSG00000028063.16"/>
</dbReference>
<dbReference type="Ensembl" id="ENSMUST00000120377.8">
    <molecule id="P48678-2"/>
    <property type="protein sequence ID" value="ENSMUSP00000113093.2"/>
    <property type="gene ID" value="ENSMUSG00000028063.16"/>
</dbReference>
<dbReference type="GeneID" id="16905"/>
<dbReference type="KEGG" id="mmu:16905"/>
<dbReference type="UCSC" id="uc008pvj.3">
    <molecule id="P48678-1"/>
    <property type="organism name" value="mouse"/>
</dbReference>
<dbReference type="UCSC" id="uc008pvk.3">
    <molecule id="P48678-3"/>
    <property type="organism name" value="mouse"/>
</dbReference>
<dbReference type="UCSC" id="uc008pvl.3">
    <molecule id="P48678-2"/>
    <property type="organism name" value="mouse"/>
</dbReference>
<dbReference type="AGR" id="MGI:96794"/>
<dbReference type="CTD" id="4000"/>
<dbReference type="MGI" id="MGI:96794">
    <property type="gene designation" value="Lmna"/>
</dbReference>
<dbReference type="VEuPathDB" id="HostDB:ENSMUSG00000028063"/>
<dbReference type="eggNOG" id="KOG0977">
    <property type="taxonomic scope" value="Eukaryota"/>
</dbReference>
<dbReference type="GeneTree" id="ENSGT00940000157244"/>
<dbReference type="HOGENOM" id="CLU_012560_9_1_1"/>
<dbReference type="InParanoid" id="P48678"/>
<dbReference type="OMA" id="DDPPITY"/>
<dbReference type="OrthoDB" id="102442at2759"/>
<dbReference type="PhylomeDB" id="P48678"/>
<dbReference type="TreeFam" id="TF101181"/>
<dbReference type="Reactome" id="R-MMU-2980766">
    <molecule id="P48678-1"/>
    <property type="pathway name" value="Nuclear Envelope Breakdown"/>
</dbReference>
<dbReference type="Reactome" id="R-MMU-2995383">
    <molecule id="P48678-1"/>
    <property type="pathway name" value="Initiation of Nuclear Envelope (NE) Reformation"/>
</dbReference>
<dbReference type="Reactome" id="R-MMU-352238">
    <molecule id="P48678-1"/>
    <property type="pathway name" value="Breakdown of the nuclear lamina"/>
</dbReference>
<dbReference type="Reactome" id="R-MMU-4419969">
    <molecule id="P48678-1"/>
    <property type="pathway name" value="Depolymerization of the Nuclear Lamina"/>
</dbReference>
<dbReference type="BioGRID-ORCS" id="16905">
    <property type="hits" value="9 hits in 81 CRISPR screens"/>
</dbReference>
<dbReference type="ChiTaRS" id="Lmna">
    <property type="organism name" value="mouse"/>
</dbReference>
<dbReference type="EvolutionaryTrace" id="P48678"/>
<dbReference type="PRO" id="PR:P48678"/>
<dbReference type="Proteomes" id="UP000000589">
    <property type="component" value="Chromosome 3"/>
</dbReference>
<dbReference type="RNAct" id="P48678">
    <property type="molecule type" value="protein"/>
</dbReference>
<dbReference type="Bgee" id="ENSMUSG00000028063">
    <property type="expression patterns" value="Expressed in ascending aorta and 253 other cell types or tissues"/>
</dbReference>
<dbReference type="ExpressionAtlas" id="P48678">
    <property type="expression patterns" value="baseline and differential"/>
</dbReference>
<dbReference type="GO" id="GO:0005638">
    <property type="term" value="C:lamin filament"/>
    <property type="evidence" value="ECO:0000314"/>
    <property type="project" value="MGI"/>
</dbReference>
<dbReference type="GO" id="GO:0005635">
    <property type="term" value="C:nuclear envelope"/>
    <property type="evidence" value="ECO:0000314"/>
    <property type="project" value="UniProtKB"/>
</dbReference>
<dbReference type="GO" id="GO:0005652">
    <property type="term" value="C:nuclear lamina"/>
    <property type="evidence" value="ECO:0000314"/>
    <property type="project" value="UniProtKB"/>
</dbReference>
<dbReference type="GO" id="GO:0016363">
    <property type="term" value="C:nuclear matrix"/>
    <property type="evidence" value="ECO:0000250"/>
    <property type="project" value="UniProtKB"/>
</dbReference>
<dbReference type="GO" id="GO:0031965">
    <property type="term" value="C:nuclear membrane"/>
    <property type="evidence" value="ECO:0000314"/>
    <property type="project" value="MGI"/>
</dbReference>
<dbReference type="GO" id="GO:0016607">
    <property type="term" value="C:nuclear speck"/>
    <property type="evidence" value="ECO:0007669"/>
    <property type="project" value="Ensembl"/>
</dbReference>
<dbReference type="GO" id="GO:0005654">
    <property type="term" value="C:nucleoplasm"/>
    <property type="evidence" value="ECO:0000250"/>
    <property type="project" value="UniProtKB"/>
</dbReference>
<dbReference type="GO" id="GO:0005634">
    <property type="term" value="C:nucleus"/>
    <property type="evidence" value="ECO:0000314"/>
    <property type="project" value="BHF-UCL"/>
</dbReference>
<dbReference type="GO" id="GO:0048471">
    <property type="term" value="C:perinuclear region of cytoplasm"/>
    <property type="evidence" value="ECO:0000250"/>
    <property type="project" value="BHF-UCL"/>
</dbReference>
<dbReference type="GO" id="GO:0035861">
    <property type="term" value="C:site of double-strand break"/>
    <property type="evidence" value="ECO:0000250"/>
    <property type="project" value="UniProtKB"/>
</dbReference>
<dbReference type="GO" id="GO:0160123">
    <property type="term" value="F:structural constituent of nuclear lamina"/>
    <property type="evidence" value="ECO:0000314"/>
    <property type="project" value="UniProtKB"/>
</dbReference>
<dbReference type="GO" id="GO:0071456">
    <property type="term" value="P:cellular response to hypoxia"/>
    <property type="evidence" value="ECO:0000250"/>
    <property type="project" value="BHF-UCL"/>
</dbReference>
<dbReference type="GO" id="GO:0090398">
    <property type="term" value="P:cellular senescence"/>
    <property type="evidence" value="ECO:0000250"/>
    <property type="project" value="UniProtKB"/>
</dbReference>
<dbReference type="GO" id="GO:1990683">
    <property type="term" value="P:DNA double-strand break attachment to nuclear envelope"/>
    <property type="evidence" value="ECO:0000250"/>
    <property type="project" value="UniProtKB"/>
</dbReference>
<dbReference type="GO" id="GO:0030010">
    <property type="term" value="P:establishment of cell polarity"/>
    <property type="evidence" value="ECO:0000303"/>
    <property type="project" value="BHF-UCL"/>
</dbReference>
<dbReference type="GO" id="GO:0030951">
    <property type="term" value="P:establishment or maintenance of microtubule cytoskeleton polarity"/>
    <property type="evidence" value="ECO:0000315"/>
    <property type="project" value="BHF-UCL"/>
</dbReference>
<dbReference type="GO" id="GO:0007517">
    <property type="term" value="P:muscle organ development"/>
    <property type="evidence" value="ECO:0000250"/>
    <property type="project" value="BHF-UCL"/>
</dbReference>
<dbReference type="GO" id="GO:1903243">
    <property type="term" value="P:negative regulation of cardiac muscle hypertrophy in response to stress"/>
    <property type="evidence" value="ECO:0000315"/>
    <property type="project" value="UniProtKB"/>
</dbReference>
<dbReference type="GO" id="GO:2001237">
    <property type="term" value="P:negative regulation of extrinsic apoptotic signaling pathway"/>
    <property type="evidence" value="ECO:0000315"/>
    <property type="project" value="MGI"/>
</dbReference>
<dbReference type="GO" id="GO:0072201">
    <property type="term" value="P:negative regulation of mesenchymal cell proliferation"/>
    <property type="evidence" value="ECO:0000315"/>
    <property type="project" value="MGI"/>
</dbReference>
<dbReference type="GO" id="GO:0090201">
    <property type="term" value="P:negative regulation of release of cytochrome c from mitochondria"/>
    <property type="evidence" value="ECO:0000315"/>
    <property type="project" value="MGI"/>
</dbReference>
<dbReference type="GO" id="GO:0006998">
    <property type="term" value="P:nuclear envelope organization"/>
    <property type="evidence" value="ECO:0000316"/>
    <property type="project" value="MGI"/>
</dbReference>
<dbReference type="GO" id="GO:0006997">
    <property type="term" value="P:nucleus organization"/>
    <property type="evidence" value="ECO:0000315"/>
    <property type="project" value="MGI"/>
</dbReference>
<dbReference type="GO" id="GO:0010628">
    <property type="term" value="P:positive regulation of gene expression"/>
    <property type="evidence" value="ECO:0000315"/>
    <property type="project" value="MGI"/>
</dbReference>
<dbReference type="GO" id="GO:0006606">
    <property type="term" value="P:protein import into nucleus"/>
    <property type="evidence" value="ECO:0000315"/>
    <property type="project" value="MGI"/>
</dbReference>
<dbReference type="GO" id="GO:0034504">
    <property type="term" value="P:protein localization to nucleus"/>
    <property type="evidence" value="ECO:0000315"/>
    <property type="project" value="UniProtKB"/>
</dbReference>
<dbReference type="GO" id="GO:0030334">
    <property type="term" value="P:regulation of cell migration"/>
    <property type="evidence" value="ECO:0000315"/>
    <property type="project" value="BHF-UCL"/>
</dbReference>
<dbReference type="GO" id="GO:1900180">
    <property type="term" value="P:regulation of protein localization to nucleus"/>
    <property type="evidence" value="ECO:0000315"/>
    <property type="project" value="MGI"/>
</dbReference>
<dbReference type="GO" id="GO:0031647">
    <property type="term" value="P:regulation of protein stability"/>
    <property type="evidence" value="ECO:0000315"/>
    <property type="project" value="MGI"/>
</dbReference>
<dbReference type="GO" id="GO:0055015">
    <property type="term" value="P:ventricular cardiac muscle cell development"/>
    <property type="evidence" value="ECO:0000315"/>
    <property type="project" value="MGI"/>
</dbReference>
<dbReference type="FunFam" id="1.20.5.170:FF:000033">
    <property type="entry name" value="Lamin A/C"/>
    <property type="match status" value="1"/>
</dbReference>
<dbReference type="FunFam" id="1.20.5.500:FF:000002">
    <property type="entry name" value="Lamin A/C"/>
    <property type="match status" value="1"/>
</dbReference>
<dbReference type="FunFam" id="2.60.40.1260:FF:000001">
    <property type="entry name" value="Lamin A/C"/>
    <property type="match status" value="1"/>
</dbReference>
<dbReference type="Gene3D" id="1.20.5.170">
    <property type="match status" value="1"/>
</dbReference>
<dbReference type="Gene3D" id="2.60.40.1260">
    <property type="entry name" value="Lamin Tail domain"/>
    <property type="match status" value="1"/>
</dbReference>
<dbReference type="Gene3D" id="1.20.5.500">
    <property type="entry name" value="Single helix bin"/>
    <property type="match status" value="1"/>
</dbReference>
<dbReference type="Gene3D" id="1.20.5.1160">
    <property type="entry name" value="Vasodilator-stimulated phosphoprotein"/>
    <property type="match status" value="1"/>
</dbReference>
<dbReference type="InterPro" id="IPR018039">
    <property type="entry name" value="IF_conserved"/>
</dbReference>
<dbReference type="InterPro" id="IPR039008">
    <property type="entry name" value="IF_rod_dom"/>
</dbReference>
<dbReference type="InterPro" id="IPR001322">
    <property type="entry name" value="Lamin_tail_dom"/>
</dbReference>
<dbReference type="InterPro" id="IPR036415">
    <property type="entry name" value="Lamin_tail_dom_sf"/>
</dbReference>
<dbReference type="PANTHER" id="PTHR45721">
    <property type="entry name" value="LAMIN DM0-RELATED"/>
    <property type="match status" value="1"/>
</dbReference>
<dbReference type="PANTHER" id="PTHR45721:SF5">
    <property type="entry name" value="PRELAMIN-A_C"/>
    <property type="match status" value="1"/>
</dbReference>
<dbReference type="Pfam" id="PF00038">
    <property type="entry name" value="Filament"/>
    <property type="match status" value="1"/>
</dbReference>
<dbReference type="Pfam" id="PF00932">
    <property type="entry name" value="LTD"/>
    <property type="match status" value="1"/>
</dbReference>
<dbReference type="SMART" id="SM01391">
    <property type="entry name" value="Filament"/>
    <property type="match status" value="1"/>
</dbReference>
<dbReference type="SUPFAM" id="SSF64593">
    <property type="entry name" value="Intermediate filament protein, coiled coil region"/>
    <property type="match status" value="2"/>
</dbReference>
<dbReference type="SUPFAM" id="SSF74853">
    <property type="entry name" value="Lamin A/C globular tail domain"/>
    <property type="match status" value="1"/>
</dbReference>
<dbReference type="PROSITE" id="PS00226">
    <property type="entry name" value="IF_ROD_1"/>
    <property type="match status" value="1"/>
</dbReference>
<dbReference type="PROSITE" id="PS51842">
    <property type="entry name" value="IF_ROD_2"/>
    <property type="match status" value="1"/>
</dbReference>
<dbReference type="PROSITE" id="PS51841">
    <property type="entry name" value="LTD"/>
    <property type="match status" value="1"/>
</dbReference>
<organism>
    <name type="scientific">Mus musculus</name>
    <name type="common">Mouse</name>
    <dbReference type="NCBI Taxonomy" id="10090"/>
    <lineage>
        <taxon>Eukaryota</taxon>
        <taxon>Metazoa</taxon>
        <taxon>Chordata</taxon>
        <taxon>Craniata</taxon>
        <taxon>Vertebrata</taxon>
        <taxon>Euteleostomi</taxon>
        <taxon>Mammalia</taxon>
        <taxon>Eutheria</taxon>
        <taxon>Euarchontoglires</taxon>
        <taxon>Glires</taxon>
        <taxon>Rodentia</taxon>
        <taxon>Myomorpha</taxon>
        <taxon>Muroidea</taxon>
        <taxon>Muridae</taxon>
        <taxon>Murinae</taxon>
        <taxon>Mus</taxon>
        <taxon>Mus</taxon>
    </lineage>
</organism>
<reference key="1">
    <citation type="journal article" date="1995" name="FEBS Lett.">
        <title>Genomic structure of the mouse A-type lamin gene locus encoding somatic and germ cell-specific lamins.</title>
        <authorList>
            <person name="Nakajima N."/>
            <person name="Abe K."/>
        </authorList>
    </citation>
    <scope>NUCLEOTIDE SEQUENCE [GENOMIC DNA]</scope>
</reference>
<reference key="2">
    <citation type="journal article" date="1989" name="Biochim. Biophys. Acta">
        <title>Nucleotide sequence of the full-length mouse lamin C cDNA and its deduced amino-acid sequence.</title>
        <authorList>
            <person name="Riedel W."/>
            <person name="Werner D."/>
        </authorList>
    </citation>
    <scope>NUCLEOTIDE SEQUENCE [MRNA] (ISOFORM C)</scope>
</reference>
<reference key="3">
    <citation type="journal article" date="1994" name="Exp. Cell Res.">
        <title>Identification and cloning of an mRNA coding for a germ cell-specific A-type lamin in mice.</title>
        <authorList>
            <person name="Furukawa K."/>
            <person name="Inagaki H."/>
            <person name="Hotta Y."/>
        </authorList>
    </citation>
    <scope>NUCLEOTIDE SEQUENCE [MRNA] (ISOFORM C2)</scope>
    <scope>FUNCTION (ISOFORM C2)</scope>
    <scope>TISSUE SPECIFICITY (ISOFORM C2)</scope>
    <source>
        <strain>ddY</strain>
        <tissue>Testis</tissue>
    </source>
</reference>
<reference key="4">
    <citation type="submission" date="2006-06" db="EMBL/GenBank/DDBJ databases">
        <title>Lamin A binds to Runx2.</title>
        <authorList>
            <person name="Fujita T."/>
        </authorList>
    </citation>
    <scope>NUCLEOTIDE SEQUENCE [MRNA] (ISOFORMS A AND C)</scope>
</reference>
<reference key="5">
    <citation type="journal article" date="2005" name="Science">
        <title>The transcriptional landscape of the mammalian genome.</title>
        <authorList>
            <person name="Carninci P."/>
            <person name="Kasukawa T."/>
            <person name="Katayama S."/>
            <person name="Gough J."/>
            <person name="Frith M.C."/>
            <person name="Maeda N."/>
            <person name="Oyama R."/>
            <person name="Ravasi T."/>
            <person name="Lenhard B."/>
            <person name="Wells C."/>
            <person name="Kodzius R."/>
            <person name="Shimokawa K."/>
            <person name="Bajic V.B."/>
            <person name="Brenner S.E."/>
            <person name="Batalov S."/>
            <person name="Forrest A.R."/>
            <person name="Zavolan M."/>
            <person name="Davis M.J."/>
            <person name="Wilming L.G."/>
            <person name="Aidinis V."/>
            <person name="Allen J.E."/>
            <person name="Ambesi-Impiombato A."/>
            <person name="Apweiler R."/>
            <person name="Aturaliya R.N."/>
            <person name="Bailey T.L."/>
            <person name="Bansal M."/>
            <person name="Baxter L."/>
            <person name="Beisel K.W."/>
            <person name="Bersano T."/>
            <person name="Bono H."/>
            <person name="Chalk A.M."/>
            <person name="Chiu K.P."/>
            <person name="Choudhary V."/>
            <person name="Christoffels A."/>
            <person name="Clutterbuck D.R."/>
            <person name="Crowe M.L."/>
            <person name="Dalla E."/>
            <person name="Dalrymple B.P."/>
            <person name="de Bono B."/>
            <person name="Della Gatta G."/>
            <person name="di Bernardo D."/>
            <person name="Down T."/>
            <person name="Engstrom P."/>
            <person name="Fagiolini M."/>
            <person name="Faulkner G."/>
            <person name="Fletcher C.F."/>
            <person name="Fukushima T."/>
            <person name="Furuno M."/>
            <person name="Futaki S."/>
            <person name="Gariboldi M."/>
            <person name="Georgii-Hemming P."/>
            <person name="Gingeras T.R."/>
            <person name="Gojobori T."/>
            <person name="Green R.E."/>
            <person name="Gustincich S."/>
            <person name="Harbers M."/>
            <person name="Hayashi Y."/>
            <person name="Hensch T.K."/>
            <person name="Hirokawa N."/>
            <person name="Hill D."/>
            <person name="Huminiecki L."/>
            <person name="Iacono M."/>
            <person name="Ikeo K."/>
            <person name="Iwama A."/>
            <person name="Ishikawa T."/>
            <person name="Jakt M."/>
            <person name="Kanapin A."/>
            <person name="Katoh M."/>
            <person name="Kawasawa Y."/>
            <person name="Kelso J."/>
            <person name="Kitamura H."/>
            <person name="Kitano H."/>
            <person name="Kollias G."/>
            <person name="Krishnan S.P."/>
            <person name="Kruger A."/>
            <person name="Kummerfeld S.K."/>
            <person name="Kurochkin I.V."/>
            <person name="Lareau L.F."/>
            <person name="Lazarevic D."/>
            <person name="Lipovich L."/>
            <person name="Liu J."/>
            <person name="Liuni S."/>
            <person name="McWilliam S."/>
            <person name="Madan Babu M."/>
            <person name="Madera M."/>
            <person name="Marchionni L."/>
            <person name="Matsuda H."/>
            <person name="Matsuzawa S."/>
            <person name="Miki H."/>
            <person name="Mignone F."/>
            <person name="Miyake S."/>
            <person name="Morris K."/>
            <person name="Mottagui-Tabar S."/>
            <person name="Mulder N."/>
            <person name="Nakano N."/>
            <person name="Nakauchi H."/>
            <person name="Ng P."/>
            <person name="Nilsson R."/>
            <person name="Nishiguchi S."/>
            <person name="Nishikawa S."/>
            <person name="Nori F."/>
            <person name="Ohara O."/>
            <person name="Okazaki Y."/>
            <person name="Orlando V."/>
            <person name="Pang K.C."/>
            <person name="Pavan W.J."/>
            <person name="Pavesi G."/>
            <person name="Pesole G."/>
            <person name="Petrovsky N."/>
            <person name="Piazza S."/>
            <person name="Reed J."/>
            <person name="Reid J.F."/>
            <person name="Ring B.Z."/>
            <person name="Ringwald M."/>
            <person name="Rost B."/>
            <person name="Ruan Y."/>
            <person name="Salzberg S.L."/>
            <person name="Sandelin A."/>
            <person name="Schneider C."/>
            <person name="Schoenbach C."/>
            <person name="Sekiguchi K."/>
            <person name="Semple C.A."/>
            <person name="Seno S."/>
            <person name="Sessa L."/>
            <person name="Sheng Y."/>
            <person name="Shibata Y."/>
            <person name="Shimada H."/>
            <person name="Shimada K."/>
            <person name="Silva D."/>
            <person name="Sinclair B."/>
            <person name="Sperling S."/>
            <person name="Stupka E."/>
            <person name="Sugiura K."/>
            <person name="Sultana R."/>
            <person name="Takenaka Y."/>
            <person name="Taki K."/>
            <person name="Tammoja K."/>
            <person name="Tan S.L."/>
            <person name="Tang S."/>
            <person name="Taylor M.S."/>
            <person name="Tegner J."/>
            <person name="Teichmann S.A."/>
            <person name="Ueda H.R."/>
            <person name="van Nimwegen E."/>
            <person name="Verardo R."/>
            <person name="Wei C.L."/>
            <person name="Yagi K."/>
            <person name="Yamanishi H."/>
            <person name="Zabarovsky E."/>
            <person name="Zhu S."/>
            <person name="Zimmer A."/>
            <person name="Hide W."/>
            <person name="Bult C."/>
            <person name="Grimmond S.M."/>
            <person name="Teasdale R.D."/>
            <person name="Liu E.T."/>
            <person name="Brusic V."/>
            <person name="Quackenbush J."/>
            <person name="Wahlestedt C."/>
            <person name="Mattick J.S."/>
            <person name="Hume D.A."/>
            <person name="Kai C."/>
            <person name="Sasaki D."/>
            <person name="Tomaru Y."/>
            <person name="Fukuda S."/>
            <person name="Kanamori-Katayama M."/>
            <person name="Suzuki M."/>
            <person name="Aoki J."/>
            <person name="Arakawa T."/>
            <person name="Iida J."/>
            <person name="Imamura K."/>
            <person name="Itoh M."/>
            <person name="Kato T."/>
            <person name="Kawaji H."/>
            <person name="Kawagashira N."/>
            <person name="Kawashima T."/>
            <person name="Kojima M."/>
            <person name="Kondo S."/>
            <person name="Konno H."/>
            <person name="Nakano K."/>
            <person name="Ninomiya N."/>
            <person name="Nishio T."/>
            <person name="Okada M."/>
            <person name="Plessy C."/>
            <person name="Shibata K."/>
            <person name="Shiraki T."/>
            <person name="Suzuki S."/>
            <person name="Tagami M."/>
            <person name="Waki K."/>
            <person name="Watahiki A."/>
            <person name="Okamura-Oho Y."/>
            <person name="Suzuki H."/>
            <person name="Kawai J."/>
            <person name="Hayashizaki Y."/>
        </authorList>
    </citation>
    <scope>NUCLEOTIDE SEQUENCE [LARGE SCALE MRNA] (ISOFORMS A AND C)</scope>
    <source>
        <strain>BALB/cJ</strain>
        <strain>C57BL/6J</strain>
        <tissue>Amnion</tissue>
        <tissue>Bone marrow</tissue>
        <tissue>Head</tissue>
        <tissue>Lung</tissue>
    </source>
</reference>
<reference key="6">
    <citation type="submission" date="2005-07" db="EMBL/GenBank/DDBJ databases">
        <authorList>
            <person name="Mural R.J."/>
            <person name="Adams M.D."/>
            <person name="Myers E.W."/>
            <person name="Smith H.O."/>
            <person name="Venter J.C."/>
        </authorList>
    </citation>
    <scope>NUCLEOTIDE SEQUENCE [LARGE SCALE GENOMIC DNA]</scope>
</reference>
<reference key="7">
    <citation type="journal article" date="2004" name="Genome Res.">
        <title>The status, quality, and expansion of the NIH full-length cDNA project: the Mammalian Gene Collection (MGC).</title>
        <authorList>
            <consortium name="The MGC Project Team"/>
        </authorList>
    </citation>
    <scope>NUCLEOTIDE SEQUENCE [LARGE SCALE MRNA]</scope>
    <source>
        <strain>FVB/N</strain>
        <tissue>Kidney</tissue>
        <tissue>Salivary gland</tissue>
    </source>
</reference>
<reference key="8">
    <citation type="journal article" date="1993" name="Biochim. Biophys. Acta">
        <title>Nucleotide sequence of a mouse lamin A cDNA and its deduced amino acid sequence.</title>
        <authorList>
            <person name="Nakajima N."/>
            <person name="Sado T."/>
        </authorList>
    </citation>
    <scope>NUCLEOTIDE SEQUENCE [MRNA] OF 235-665 (ISOFORM A)</scope>
</reference>
<reference key="9">
    <citation type="journal article" date="1989" name="FEBS Lett.">
        <title>Maturation of nuclear lamin A involves a specific carboxy-terminal trimming, which removes the polyisoprenylation site from the precursor; implications for the structure of the nuclear lamina.</title>
        <authorList>
            <person name="Weber K."/>
            <person name="Plessmann U."/>
            <person name="Traub P."/>
        </authorList>
    </citation>
    <scope>PROTEIN SEQUENCE OF 521-574</scope>
    <scope>C-TERMINAL PROCESSING OF ISOFORM A</scope>
</reference>
<reference key="10">
    <citation type="journal article" date="1991" name="FEBS Lett.">
        <title>Identification of phosphorylation sites on murine nuclear lamin C by RP-HPLC and microsequencing.</title>
        <authorList>
            <person name="Eggert M."/>
            <person name="Radomski N."/>
            <person name="Tripier D."/>
            <person name="Traub P."/>
            <person name="Jost E."/>
        </authorList>
    </citation>
    <scope>PARTIAL PROTEIN SEQUENCE</scope>
    <scope>PHOSPHORYLATION AT SER-392; SER-407 AND SER-409 (ISOFORM C)</scope>
</reference>
<reference key="11">
    <citation type="journal article" date="1999" name="J. Cell Biol.">
        <title>Loss of A-type lamin expression compromises nuclear envelope integrity leading to muscular dystrophy.</title>
        <authorList>
            <person name="Sullivan T."/>
            <person name="Escalante-Alcalde D."/>
            <person name="Bhatt H."/>
            <person name="Anver M."/>
            <person name="Bhat N."/>
            <person name="Nagashima K."/>
            <person name="Stewart C.L."/>
            <person name="Burke B."/>
        </authorList>
    </citation>
    <scope>FUNCTION</scope>
    <scope>SUBCELLULAR LOCATION</scope>
    <scope>TISSUE SPECIFICITY</scope>
    <scope>DISRUPTION PHENOTYPE</scope>
</reference>
<reference key="12">
    <citation type="journal article" date="2002" name="Am. J. Hum. Genet.">
        <title>Homozygous defects in LMNA, encoding lamin A/C nuclear-envelope proteins, cause autosomal recessive axonal neuropathy in human (Charcot-Marie-Tooth disorder type 2) and mouse.</title>
        <authorList>
            <person name="De Sandre-Giovannoli A."/>
            <person name="Chaouch M."/>
            <person name="Kozlov S."/>
            <person name="Vallat J.-M."/>
            <person name="Tazir M."/>
            <person name="Kassouri N."/>
            <person name="Szepetowski P."/>
            <person name="Hammadouche T."/>
            <person name="Vandenberghe A."/>
            <person name="Stewart C.L."/>
            <person name="Grid D."/>
            <person name="Levy N."/>
        </authorList>
    </citation>
    <scope>FUNCTION</scope>
    <scope>DISRUPTION PHENOTYPE</scope>
</reference>
<reference key="13">
    <citation type="journal article" date="2002" name="Hum. Mol. Genet.">
        <title>A novel interaction between lamin A and SREBP1: implications for partial lipodystrophy and other laminopathies.</title>
        <authorList>
            <person name="Lloyd D.J."/>
            <person name="Trembath R.C."/>
            <person name="Shackleton S."/>
        </authorList>
    </citation>
    <scope>INTERACTION WITH SREBF1 AND SREBF2</scope>
</reference>
<reference key="14">
    <citation type="journal article" date="2006" name="J. Cell Biol.">
        <title>Coupling of the nucleus and cytoplasm: role of the LINC complex.</title>
        <authorList>
            <person name="Crisp M."/>
            <person name="Liu Q."/>
            <person name="Roux K."/>
            <person name="Rattner J.B."/>
            <person name="Shanahan C."/>
            <person name="Burke B."/>
            <person name="Stahl P.D."/>
            <person name="Hodzic D."/>
        </authorList>
    </citation>
    <scope>INTERACTION WITH SUN1</scope>
</reference>
<reference key="15">
    <citation type="journal article" date="2006" name="Mol. Cell. Biol.">
        <title>SUN1 interacts with nuclear lamin A and cytoplasmic nesprins to provide a physical connection between the nuclear lamina and the cytoskeleton.</title>
        <authorList>
            <person name="Haque F."/>
            <person name="Lloyd D.J."/>
            <person name="Smallwood D.T."/>
            <person name="Dent C.L."/>
            <person name="Shanahan C.M."/>
            <person name="Fry A.M."/>
            <person name="Trembath R.C."/>
            <person name="Shackleton S."/>
        </authorList>
    </citation>
    <scope>INTERACTION WITH SUN1</scope>
</reference>
<reference key="16">
    <citation type="journal article" date="2006" name="Mol. Cell. Proteomics">
        <title>Comprehensive identification of phosphorylation sites in postsynaptic density preparations.</title>
        <authorList>
            <person name="Trinidad J.C."/>
            <person name="Specht C.G."/>
            <person name="Thalhammer A."/>
            <person name="Schoepfer R."/>
            <person name="Burlingame A.L."/>
        </authorList>
    </citation>
    <scope>IDENTIFICATION BY MASS SPECTROMETRY [LARGE SCALE ANALYSIS]</scope>
    <source>
        <tissue>Brain</tissue>
    </source>
</reference>
<reference key="17">
    <citation type="journal article" date="2007" name="Proc. Natl. Acad. Sci. U.S.A.">
        <title>Large-scale phosphorylation analysis of mouse liver.</title>
        <authorList>
            <person name="Villen J."/>
            <person name="Beausoleil S.A."/>
            <person name="Gerber S.A."/>
            <person name="Gygi S.P."/>
        </authorList>
    </citation>
    <scope>PHOSPHORYLATION [LARGE SCALE ANALYSIS] AT THR-19; SER-22 AND SER-653</scope>
    <scope>IDENTIFICATION BY MASS SPECTROMETRY [LARGE SCALE ANALYSIS]</scope>
    <source>
        <tissue>Liver</tissue>
    </source>
</reference>
<reference key="18">
    <citation type="journal article" date="2007" name="Proc. Natl. Acad. Sci. U.S.A.">
        <title>HIV protease inhibitors block the zinc metalloproteinase ZMPSTE24 and lead to an accumulation of prelamin A in cells.</title>
        <authorList>
            <person name="Coffinier C."/>
            <person name="Hudon S.E."/>
            <person name="Farber E.A."/>
            <person name="Chang S.Y."/>
            <person name="Hrycyna C.A."/>
            <person name="Young S.G."/>
            <person name="Fong L.G."/>
        </authorList>
    </citation>
    <scope>PROTEOLYTIC PROCESSING</scope>
</reference>
<reference key="19">
    <citation type="journal article" date="2008" name="J. Cell Biol.">
        <title>Sumoylation regulates lamin A function and is lost in lamin A mutants associated with familial cardiomyopathies.</title>
        <authorList>
            <person name="Zhang Y.Q."/>
            <person name="Sarge K.D."/>
        </authorList>
    </citation>
    <scope>SUBCELLULAR LOCATION</scope>
    <scope>SUMOYLATION AT LYS-201</scope>
    <scope>MUTAGENESIS OF LYS-201 AND GLU-203</scope>
</reference>
<reference key="20">
    <citation type="journal article" date="2008" name="J. Cell Sci.">
        <title>LUMA interacts with emerin and influences its distribution at the inner nuclear membrane.</title>
        <authorList>
            <person name="Bengtsson L."/>
            <person name="Otto H."/>
        </authorList>
    </citation>
    <scope>INTERACTION WITH TMEM43</scope>
</reference>
<reference key="21">
    <citation type="journal article" date="2009" name="Immunity">
        <title>The phagosomal proteome in interferon-gamma-activated macrophages.</title>
        <authorList>
            <person name="Trost M."/>
            <person name="English L."/>
            <person name="Lemieux S."/>
            <person name="Courcelles M."/>
            <person name="Desjardins M."/>
            <person name="Thibault P."/>
        </authorList>
    </citation>
    <scope>PHOSPHORYLATION [LARGE SCALE ANALYSIS] AT SER-22 AND SER-546</scope>
    <scope>IDENTIFICATION BY MASS SPECTROMETRY [LARGE SCALE ANALYSIS]</scope>
</reference>
<reference key="22">
    <citation type="journal article" date="2009" name="J. Cell Biol.">
        <title>Lamin A/C-mediated neuromuscular junction defects in Emery-Dreifuss muscular dystrophy.</title>
        <authorList>
            <person name="Mejat A."/>
            <person name="Decostre V."/>
            <person name="Li J."/>
            <person name="Renou L."/>
            <person name="Kesari A."/>
            <person name="Hantai D."/>
            <person name="Stewart C.L."/>
            <person name="Xiao X."/>
            <person name="Hoffman E."/>
            <person name="Bonne G."/>
            <person name="Misteli T."/>
        </authorList>
    </citation>
    <scope>FUNCTION</scope>
    <scope>DISRUPTION PHENOTYPE</scope>
</reference>
<reference key="23">
    <citation type="journal article" date="2009" name="J. Cell Sci.">
        <title>Dynamics and molecular interactions of linker of nucleoskeleton and cytoskeleton (LINC) complex proteins.</title>
        <authorList>
            <person name="Ostlund C."/>
            <person name="Folker E.S."/>
            <person name="Choi J.C."/>
            <person name="Gomes E.R."/>
            <person name="Gundersen G.G."/>
            <person name="Worman H.J."/>
        </authorList>
    </citation>
    <scope>INTERACTION WITH SUN1 AND SUN2</scope>
</reference>
<reference key="24">
    <citation type="journal article" date="2009" name="Mol. Cell. Proteomics">
        <title>Large scale localization of protein phosphorylation by use of electron capture dissociation mass spectrometry.</title>
        <authorList>
            <person name="Sweet S.M."/>
            <person name="Bailey C.M."/>
            <person name="Cunningham D.L."/>
            <person name="Heath J.K."/>
            <person name="Cooper H.J."/>
        </authorList>
    </citation>
    <scope>PHOSPHORYLATION [LARGE SCALE ANALYSIS] AT SER-390 AND SER-392</scope>
    <scope>IDENTIFICATION BY MASS SPECTROMETRY [LARGE SCALE ANALYSIS]</scope>
    <source>
        <tissue>Embryonic fibroblast</tissue>
    </source>
</reference>
<reference key="25">
    <citation type="journal article" date="2010" name="Cell">
        <title>A tissue-specific atlas of mouse protein phosphorylation and expression.</title>
        <authorList>
            <person name="Huttlin E.L."/>
            <person name="Jedrychowski M.P."/>
            <person name="Elias J.E."/>
            <person name="Goswami T."/>
            <person name="Rad R."/>
            <person name="Beausoleil S.A."/>
            <person name="Villen J."/>
            <person name="Haas W."/>
            <person name="Sowa M.E."/>
            <person name="Gygi S.P."/>
        </authorList>
    </citation>
    <scope>PHOSPHORYLATION [LARGE SCALE ANALYSIS] AT SER-12; THR-19; SER-22; SER-301; SER-390; SER-392; SER-458; THR-548; SER-570; SER-573; SER-617; SER-620; SER-629; SER-633; SER-637 AND SER-653</scope>
    <scope>PHOSPHORYLATION [LARGE SCALE ANALYSIS] AT SER-572 (ISOFORM C)</scope>
    <scope>PHOSPHORYLATION [LARGE SCALE ANALYSIS] AT SER-460 (ISOFORM C2)</scope>
    <scope>IDENTIFICATION BY MASS SPECTROMETRY [LARGE SCALE ANALYSIS]</scope>
    <source>
        <tissue>Brain</tissue>
        <tissue>Brown adipose tissue</tissue>
        <tissue>Heart</tissue>
        <tissue>Kidney</tissue>
        <tissue>Liver</tissue>
        <tissue>Lung</tissue>
        <tissue>Pancreas</tissue>
        <tissue>Spleen</tissue>
        <tissue>Testis</tissue>
    </source>
</reference>
<reference key="26">
    <citation type="journal article" date="2010" name="J. Biol. Chem.">
        <title>Mammalian SUN protein interaction networks at the inner nuclear membrane and their role in laminopathy disease processes.</title>
        <authorList>
            <person name="Haque F."/>
            <person name="Mazzeo D."/>
            <person name="Patel J.T."/>
            <person name="Smallwood D.T."/>
            <person name="Ellis J.A."/>
            <person name="Shanahan C.M."/>
            <person name="Shackleton S."/>
        </authorList>
    </citation>
    <scope>INTERACTION WITH SUN2</scope>
</reference>
<reference key="27">
    <citation type="journal article" date="2011" name="J. Biol. Chem.">
        <title>Identification of a novel muscle enriched A-type Lamin interacting protein (MLIP).</title>
        <authorList>
            <person name="Ahmady E."/>
            <person name="Deeke S.A."/>
            <person name="Rabaa S."/>
            <person name="Kouri L."/>
            <person name="Kenney L."/>
            <person name="Stewart A.F."/>
            <person name="Burgon P.G."/>
        </authorList>
    </citation>
    <scope>INTERACTION WITH MLIP</scope>
</reference>
<reference key="28">
    <citation type="journal article" date="2011" name="Mech. Ageing Dev.">
        <title>Lamin A/C deficiency is associated with fat infiltration of muscle and bone.</title>
        <authorList>
            <person name="Tong J."/>
            <person name="Li W."/>
            <person name="Vidal C."/>
            <person name="Yeo L.S."/>
            <person name="Fatkin D."/>
            <person name="Duque G."/>
        </authorList>
    </citation>
    <scope>FUNCTION</scope>
    <scope>DISRUPTION PHENOTYPE</scope>
</reference>
<reference key="29">
    <citation type="journal article" date="2011" name="PLoS ONE">
        <title>Decreased bone formation and osteopenia in lamin a/c-deficient mice.</title>
        <authorList>
            <person name="Li W."/>
            <person name="Yeo L.S."/>
            <person name="Vidal C."/>
            <person name="McCorquodale T."/>
            <person name="Herrmann M."/>
            <person name="Fatkin D."/>
            <person name="Duque G."/>
        </authorList>
    </citation>
    <scope>FUNCTION</scope>
    <scope>TISSUE SPECIFICITY</scope>
    <scope>DISRUPTION PHENOTYPE</scope>
</reference>
<reference key="30">
    <citation type="journal article" date="2012" name="J. Cell Sci.">
        <title>Samp1 is a component of TAN lines and is required for nuclear movement.</title>
        <authorList>
            <person name="Borrego-Pinto J."/>
            <person name="Jegou T."/>
            <person name="Osorio D.S."/>
            <person name="Aurade F."/>
            <person name="Gorjanacz M."/>
            <person name="Koch B."/>
            <person name="Mattaj I.W."/>
            <person name="Gomes E.R."/>
        </authorList>
    </citation>
    <scope>INTERACTION WITH TMEM201</scope>
</reference>
<reference key="31">
    <citation type="journal article" date="2013" name="Mol. Cell">
        <title>SIRT5-mediated lysine desuccinylation impacts diverse metabolic pathways.</title>
        <authorList>
            <person name="Park J."/>
            <person name="Chen Y."/>
            <person name="Tishkoff D.X."/>
            <person name="Peng C."/>
            <person name="Tan M."/>
            <person name="Dai L."/>
            <person name="Xie Z."/>
            <person name="Zhang Y."/>
            <person name="Zwaans B.M."/>
            <person name="Skinner M.E."/>
            <person name="Lombard D.B."/>
            <person name="Zhao Y."/>
        </authorList>
    </citation>
    <scope>ACETYLATION [LARGE SCALE ANALYSIS] AT LYS-32; LYS-123; LYS-135; LYS-155; LYS-171; LYS-201; LYS-260; LYS-270; LYS-311; LYS-450 AND LYS-457</scope>
    <scope>SUCCINYLATION [LARGE SCALE ANALYSIS] AT LYS-32 AND LYS-171</scope>
    <scope>IDENTIFICATION BY MASS SPECTROMETRY [LARGE SCALE ANALYSIS]</scope>
    <source>
        <tissue>Embryonic fibroblast</tissue>
    </source>
</reference>
<reference key="32">
    <citation type="journal article" date="2013" name="Nat. Commun.">
        <title>Depleting the methyltransferase Suv39h1 improves DNA repair and extends lifespan in a progeria mouse model.</title>
        <authorList>
            <person name="Liu B."/>
            <person name="Wang Z."/>
            <person name="Zhang L."/>
            <person name="Ghosh S."/>
            <person name="Zheng H."/>
            <person name="Zhou Z."/>
        </authorList>
    </citation>
    <scope>INTERACTION WITH SUV39H1</scope>
</reference>
<reference key="33">
    <citation type="journal article" date="2013" name="Hum. Mol. Genet.">
        <title>Defective skeletal muscle growth in lamin A/C-deficient mice is rescued by loss of Lap2alpha.</title>
        <authorList>
            <person name="Cohen T.V."/>
            <person name="Gnocchi V.F."/>
            <person name="Cohen J.E."/>
            <person name="Phadke A."/>
            <person name="Liu H."/>
            <person name="Ellis J.A."/>
            <person name="Foisner R."/>
            <person name="Stewart C.L."/>
            <person name="Zammit P.S."/>
            <person name="Partridge T.A."/>
        </authorList>
    </citation>
    <scope>FUNCTION</scope>
    <scope>DISRUPTION PHENOTYPE</scope>
</reference>
<reference key="34">
    <citation type="journal article" date="2015" name="J. Clin. Invest.">
        <title>Cardiomyocyte-enriched protein CIP protects against pathophysiological stresses and regulates cardiac homeostasis.</title>
        <authorList>
            <person name="Huang Z.P."/>
            <person name="Kataoka M."/>
            <person name="Chen J."/>
            <person name="Wu G."/>
            <person name="Ding J."/>
            <person name="Nie M."/>
            <person name="Lin Z."/>
            <person name="Liu J."/>
            <person name="Hu X."/>
            <person name="Ma L."/>
            <person name="Zhou B."/>
            <person name="Wakimoto H."/>
            <person name="Zeng C."/>
            <person name="Kyselovic J."/>
            <person name="Deng Z.L."/>
            <person name="Seidman C.E."/>
            <person name="Seidman J.G."/>
            <person name="Pu W.T."/>
            <person name="Wang D.Z."/>
        </authorList>
    </citation>
    <scope>FUNCTION</scope>
    <scope>DISRUPTION PHENOTYPE</scope>
    <scope>INTERACTION WITH MLIP</scope>
    <scope>SUBCELLULAR LOCATION</scope>
</reference>
<reference key="35">
    <citation type="journal article" date="2017" name="Nature">
        <title>The molecular architecture of lamins in somatic cells.</title>
        <authorList>
            <person name="Turgay Y."/>
            <person name="Eibauer M."/>
            <person name="Goldman A.E."/>
            <person name="Shimi T."/>
            <person name="Khayat M."/>
            <person name="Ben-Harush K."/>
            <person name="Dubrovsky-Gaupp A."/>
            <person name="Sapra K.T."/>
            <person name="Goldman R.D."/>
            <person name="Medalia O."/>
        </authorList>
    </citation>
    <scope>FUNCTION</scope>
    <scope>SUBUNIT</scope>
    <scope>SUBCELLULAR LOCATION</scope>
</reference>
<reference key="36">
    <citation type="journal article" date="2019" name="Nat. Cell Biol.">
        <title>The NSL complex maintains nuclear architecture stability via lamin A/C acetylation.</title>
        <authorList>
            <person name="Karoutas A."/>
            <person name="Szymanski W."/>
            <person name="Rausch T."/>
            <person name="Guhathakurta S."/>
            <person name="Rog-Zielinska E.A."/>
            <person name="Peyronnet R."/>
            <person name="Seyfferth J."/>
            <person name="Chen H.R."/>
            <person name="de Leeuw R."/>
            <person name="Herquel B."/>
            <person name="Kimura H."/>
            <person name="Mittler G."/>
            <person name="Kohl P."/>
            <person name="Medalia O."/>
            <person name="Korbel J.O."/>
            <person name="Akhtar A."/>
        </authorList>
    </citation>
    <scope>ACETYLATION AT LYS-32; LYS-78; LYS-97; LYS-108; LYS-114; LYS-135; LYS-144; LYS-155; LYS-171; LYS-180; LYS-201; LYS-208; LYS-233; LYS-260; LYS-265; LYS-270; LYS-311; LYS-316; LYS-341; LYS-417; LYS-420; LYS-450 AND LYS-486</scope>
    <scope>MUTAGENESIS OF LYS-97; LYS-108; 311-LYS--LYS-319 AND LYS-311</scope>
</reference>
<reference key="37">
    <citation type="submission" date="2004-06" db="PDB data bank">
        <title>Solution structure of immunoglobulin-like domain of mouse nuclear lamin.</title>
        <authorList>
            <consortium name="RIKEN structural genomics initiative (RSGI)"/>
        </authorList>
    </citation>
    <scope>STRUCTURE BY NMR OF 406-546</scope>
</reference>